<accession>Q2KV65</accession>
<name>CHEB1_BORA1</name>
<reference key="1">
    <citation type="journal article" date="2006" name="J. Bacteriol.">
        <title>Comparison of the genome sequence of the poultry pathogen Bordetella avium with those of B. bronchiseptica, B. pertussis, and B. parapertussis reveals extensive diversity in surface structures associated with host interaction.</title>
        <authorList>
            <person name="Sebaihia M."/>
            <person name="Preston A."/>
            <person name="Maskell D.J."/>
            <person name="Kuzmiak H."/>
            <person name="Connell T.D."/>
            <person name="King N.D."/>
            <person name="Orndorff P.E."/>
            <person name="Miyamoto D.M."/>
            <person name="Thomson N.R."/>
            <person name="Harris D."/>
            <person name="Goble A."/>
            <person name="Lord A."/>
            <person name="Murphy L."/>
            <person name="Quail M.A."/>
            <person name="Rutter S."/>
            <person name="Squares R."/>
            <person name="Squares S."/>
            <person name="Woodward J."/>
            <person name="Parkhill J."/>
            <person name="Temple L.M."/>
        </authorList>
    </citation>
    <scope>NUCLEOTIDE SEQUENCE [LARGE SCALE GENOMIC DNA]</scope>
    <source>
        <strain>197N</strain>
    </source>
</reference>
<dbReference type="EC" id="3.1.1.61" evidence="1"/>
<dbReference type="EC" id="3.5.1.44" evidence="1"/>
<dbReference type="EMBL" id="AM167904">
    <property type="protein sequence ID" value="CAJ48634.1"/>
    <property type="molecule type" value="Genomic_DNA"/>
</dbReference>
<dbReference type="RefSeq" id="WP_012416711.1">
    <property type="nucleotide sequence ID" value="NC_010645.1"/>
</dbReference>
<dbReference type="SMR" id="Q2KV65"/>
<dbReference type="STRING" id="360910.BAV1025"/>
<dbReference type="KEGG" id="bav:BAV1025"/>
<dbReference type="eggNOG" id="COG2201">
    <property type="taxonomic scope" value="Bacteria"/>
</dbReference>
<dbReference type="HOGENOM" id="CLU_000445_51_0_4"/>
<dbReference type="OrthoDB" id="9793421at2"/>
<dbReference type="Proteomes" id="UP000001977">
    <property type="component" value="Chromosome"/>
</dbReference>
<dbReference type="GO" id="GO:0005737">
    <property type="term" value="C:cytoplasm"/>
    <property type="evidence" value="ECO:0007669"/>
    <property type="project" value="UniProtKB-SubCell"/>
</dbReference>
<dbReference type="GO" id="GO:0000156">
    <property type="term" value="F:phosphorelay response regulator activity"/>
    <property type="evidence" value="ECO:0007669"/>
    <property type="project" value="InterPro"/>
</dbReference>
<dbReference type="GO" id="GO:0008984">
    <property type="term" value="F:protein-glutamate methylesterase activity"/>
    <property type="evidence" value="ECO:0007669"/>
    <property type="project" value="UniProtKB-UniRule"/>
</dbReference>
<dbReference type="GO" id="GO:0050568">
    <property type="term" value="F:protein-glutamine glutaminase activity"/>
    <property type="evidence" value="ECO:0007669"/>
    <property type="project" value="UniProtKB-UniRule"/>
</dbReference>
<dbReference type="GO" id="GO:0006935">
    <property type="term" value="P:chemotaxis"/>
    <property type="evidence" value="ECO:0007669"/>
    <property type="project" value="UniProtKB-UniRule"/>
</dbReference>
<dbReference type="CDD" id="cd16432">
    <property type="entry name" value="CheB_Rec"/>
    <property type="match status" value="1"/>
</dbReference>
<dbReference type="CDD" id="cd17541">
    <property type="entry name" value="REC_CheB-like"/>
    <property type="match status" value="1"/>
</dbReference>
<dbReference type="Gene3D" id="3.40.50.2300">
    <property type="match status" value="1"/>
</dbReference>
<dbReference type="Gene3D" id="3.40.50.180">
    <property type="entry name" value="Methylesterase CheB, C-terminal domain"/>
    <property type="match status" value="1"/>
</dbReference>
<dbReference type="HAMAP" id="MF_00099">
    <property type="entry name" value="CheB_chemtxs"/>
    <property type="match status" value="1"/>
</dbReference>
<dbReference type="InterPro" id="IPR008248">
    <property type="entry name" value="CheB-like"/>
</dbReference>
<dbReference type="InterPro" id="IPR035909">
    <property type="entry name" value="CheB_C"/>
</dbReference>
<dbReference type="InterPro" id="IPR011006">
    <property type="entry name" value="CheY-like_superfamily"/>
</dbReference>
<dbReference type="InterPro" id="IPR000673">
    <property type="entry name" value="Sig_transdc_resp-reg_Me-estase"/>
</dbReference>
<dbReference type="InterPro" id="IPR001789">
    <property type="entry name" value="Sig_transdc_resp-reg_receiver"/>
</dbReference>
<dbReference type="NCBIfam" id="NF001965">
    <property type="entry name" value="PRK00742.1"/>
    <property type="match status" value="1"/>
</dbReference>
<dbReference type="NCBIfam" id="NF009206">
    <property type="entry name" value="PRK12555.1"/>
    <property type="match status" value="1"/>
</dbReference>
<dbReference type="PANTHER" id="PTHR42872">
    <property type="entry name" value="PROTEIN-GLUTAMATE METHYLESTERASE/PROTEIN-GLUTAMINE GLUTAMINASE"/>
    <property type="match status" value="1"/>
</dbReference>
<dbReference type="PANTHER" id="PTHR42872:SF6">
    <property type="entry name" value="PROTEIN-GLUTAMATE METHYLESTERASE_PROTEIN-GLUTAMINE GLUTAMINASE"/>
    <property type="match status" value="1"/>
</dbReference>
<dbReference type="Pfam" id="PF01339">
    <property type="entry name" value="CheB_methylest"/>
    <property type="match status" value="1"/>
</dbReference>
<dbReference type="Pfam" id="PF00072">
    <property type="entry name" value="Response_reg"/>
    <property type="match status" value="1"/>
</dbReference>
<dbReference type="PIRSF" id="PIRSF000876">
    <property type="entry name" value="RR_chemtxs_CheB"/>
    <property type="match status" value="1"/>
</dbReference>
<dbReference type="SMART" id="SM00448">
    <property type="entry name" value="REC"/>
    <property type="match status" value="1"/>
</dbReference>
<dbReference type="SUPFAM" id="SSF52172">
    <property type="entry name" value="CheY-like"/>
    <property type="match status" value="1"/>
</dbReference>
<dbReference type="SUPFAM" id="SSF52738">
    <property type="entry name" value="Methylesterase CheB, C-terminal domain"/>
    <property type="match status" value="1"/>
</dbReference>
<dbReference type="PROSITE" id="PS50122">
    <property type="entry name" value="CHEB"/>
    <property type="match status" value="1"/>
</dbReference>
<dbReference type="PROSITE" id="PS50110">
    <property type="entry name" value="RESPONSE_REGULATORY"/>
    <property type="match status" value="1"/>
</dbReference>
<evidence type="ECO:0000255" key="1">
    <source>
        <dbReference type="HAMAP-Rule" id="MF_00099"/>
    </source>
</evidence>
<feature type="chain" id="PRO_0000264262" description="Protein-glutamate methylesterase/protein-glutamine glutaminase 1">
    <location>
        <begin position="1"/>
        <end position="342"/>
    </location>
</feature>
<feature type="domain" description="Response regulatory" evidence="1">
    <location>
        <begin position="2"/>
        <end position="119"/>
    </location>
</feature>
<feature type="domain" description="CheB-type methylesterase" evidence="1">
    <location>
        <begin position="146"/>
        <end position="329"/>
    </location>
</feature>
<feature type="active site" evidence="1">
    <location>
        <position position="158"/>
    </location>
</feature>
<feature type="active site" evidence="1">
    <location>
        <position position="185"/>
    </location>
</feature>
<feature type="active site" evidence="1">
    <location>
        <position position="278"/>
    </location>
</feature>
<feature type="modified residue" description="4-aspartylphosphate" evidence="1">
    <location>
        <position position="53"/>
    </location>
</feature>
<gene>
    <name evidence="1" type="primary">cheB1</name>
    <name type="ordered locus">BAV1025</name>
</gene>
<proteinExistence type="inferred from homology"/>
<keyword id="KW-0145">Chemotaxis</keyword>
<keyword id="KW-0963">Cytoplasm</keyword>
<keyword id="KW-0378">Hydrolase</keyword>
<keyword id="KW-0597">Phosphoprotein</keyword>
<keyword id="KW-1185">Reference proteome</keyword>
<sequence length="342" mass="36012">MRVAIVNDMPLAVEALRRSLAHDPELSLAWIASDGLQAVRRCAADLPDVILMDLMMPVMNGVEATRLIMAESPCAIIVVTSDVLQHTSLVFEAMGHGALDAVDTPVLGRGDPKAAAQRLLRKIRNAGWLIGKKTVALERTTAMASSDTDAALVVIGASAGGPPSLAAVLRALPASFPAAIVLVQHVDAAFTSGMAAWLNEQCVLPVRLASDGLRPEAGVVLLAGAGEHLVLGAERKLHYTTEPRESVYSPSIDVFFHSVAQHWRGRAAGVLLTGMGQDGALGLKAMRERGFFTIAQDRATSAVYGMPKAAAALDAACEILPLGDIAPRLEKVFAPPANPLFN</sequence>
<organism>
    <name type="scientific">Bordetella avium (strain 197N)</name>
    <dbReference type="NCBI Taxonomy" id="360910"/>
    <lineage>
        <taxon>Bacteria</taxon>
        <taxon>Pseudomonadati</taxon>
        <taxon>Pseudomonadota</taxon>
        <taxon>Betaproteobacteria</taxon>
        <taxon>Burkholderiales</taxon>
        <taxon>Alcaligenaceae</taxon>
        <taxon>Bordetella</taxon>
    </lineage>
</organism>
<protein>
    <recommendedName>
        <fullName evidence="1">Protein-glutamate methylesterase/protein-glutamine glutaminase 1</fullName>
        <ecNumber evidence="1">3.1.1.61</ecNumber>
        <ecNumber evidence="1">3.5.1.44</ecNumber>
    </recommendedName>
</protein>
<comment type="function">
    <text evidence="1">Involved in chemotaxis. Part of a chemotaxis signal transduction system that modulates chemotaxis in response to various stimuli. Catalyzes the demethylation of specific methylglutamate residues introduced into the chemoreceptors (methyl-accepting chemotaxis proteins or MCP) by CheR. Also mediates the irreversible deamidation of specific glutamine residues to glutamic acid.</text>
</comment>
<comment type="catalytic activity">
    <reaction evidence="1">
        <text>[protein]-L-glutamate 5-O-methyl ester + H2O = L-glutamyl-[protein] + methanol + H(+)</text>
        <dbReference type="Rhea" id="RHEA:23236"/>
        <dbReference type="Rhea" id="RHEA-COMP:10208"/>
        <dbReference type="Rhea" id="RHEA-COMP:10311"/>
        <dbReference type="ChEBI" id="CHEBI:15377"/>
        <dbReference type="ChEBI" id="CHEBI:15378"/>
        <dbReference type="ChEBI" id="CHEBI:17790"/>
        <dbReference type="ChEBI" id="CHEBI:29973"/>
        <dbReference type="ChEBI" id="CHEBI:82795"/>
        <dbReference type="EC" id="3.1.1.61"/>
    </reaction>
</comment>
<comment type="catalytic activity">
    <reaction evidence="1">
        <text>L-glutaminyl-[protein] + H2O = L-glutamyl-[protein] + NH4(+)</text>
        <dbReference type="Rhea" id="RHEA:16441"/>
        <dbReference type="Rhea" id="RHEA-COMP:10207"/>
        <dbReference type="Rhea" id="RHEA-COMP:10208"/>
        <dbReference type="ChEBI" id="CHEBI:15377"/>
        <dbReference type="ChEBI" id="CHEBI:28938"/>
        <dbReference type="ChEBI" id="CHEBI:29973"/>
        <dbReference type="ChEBI" id="CHEBI:30011"/>
        <dbReference type="EC" id="3.5.1.44"/>
    </reaction>
</comment>
<comment type="subcellular location">
    <subcellularLocation>
        <location evidence="1">Cytoplasm</location>
    </subcellularLocation>
</comment>
<comment type="domain">
    <text evidence="1">Contains a C-terminal catalytic domain, and an N-terminal region which modulates catalytic activity.</text>
</comment>
<comment type="PTM">
    <text evidence="1">Phosphorylated by CheA. Phosphorylation of the N-terminal regulatory domain activates the methylesterase activity.</text>
</comment>
<comment type="similarity">
    <text evidence="1">Belongs to the CheB family.</text>
</comment>